<sequence>MPSGDASADPIEARFDPAAMPARMAAALDAMRLGIPVVVLDDADRENEADLIIAADRLTHAGMAMLIRECSGIVCLCLTAEKAAVLGLRPMVEHNRSQYGTAFTVSIEARVGVSTGVSAADRITTIRAAVAPDADAQSVVSPGHVFPLVAQAGGVLARRGHTEGSVDLARLAGLSPAGVLCELMLPDGTMARRDDAVRFADQHGLPVLTIEDIARYREQMARAVSFA</sequence>
<protein>
    <recommendedName>
        <fullName evidence="1">3,4-dihydroxy-2-butanone 4-phosphate synthase</fullName>
        <shortName evidence="1">DHBP synthase</shortName>
        <ecNumber evidence="1">4.1.99.12</ecNumber>
    </recommendedName>
</protein>
<feature type="chain" id="PRO_0000151808" description="3,4-dihydroxy-2-butanone 4-phosphate synthase">
    <location>
        <begin position="1"/>
        <end position="227"/>
    </location>
</feature>
<feature type="binding site" evidence="1">
    <location>
        <begin position="45"/>
        <end position="46"/>
    </location>
    <ligand>
        <name>D-ribulose 5-phosphate</name>
        <dbReference type="ChEBI" id="CHEBI:58121"/>
    </ligand>
</feature>
<feature type="binding site" evidence="1">
    <location>
        <position position="46"/>
    </location>
    <ligand>
        <name>Mg(2+)</name>
        <dbReference type="ChEBI" id="CHEBI:18420"/>
        <label>1</label>
    </ligand>
</feature>
<feature type="binding site" evidence="1">
    <location>
        <position position="46"/>
    </location>
    <ligand>
        <name>Mg(2+)</name>
        <dbReference type="ChEBI" id="CHEBI:18420"/>
        <label>2</label>
    </ligand>
</feature>
<feature type="binding site" evidence="1">
    <location>
        <position position="50"/>
    </location>
    <ligand>
        <name>D-ribulose 5-phosphate</name>
        <dbReference type="ChEBI" id="CHEBI:58121"/>
    </ligand>
</feature>
<feature type="binding site" evidence="1">
    <location>
        <begin position="158"/>
        <end position="162"/>
    </location>
    <ligand>
        <name>D-ribulose 5-phosphate</name>
        <dbReference type="ChEBI" id="CHEBI:58121"/>
    </ligand>
</feature>
<feature type="binding site" evidence="1">
    <location>
        <position position="161"/>
    </location>
    <ligand>
        <name>Mg(2+)</name>
        <dbReference type="ChEBI" id="CHEBI:18420"/>
        <label>2</label>
    </ligand>
</feature>
<feature type="binding site" evidence="1">
    <location>
        <position position="182"/>
    </location>
    <ligand>
        <name>D-ribulose 5-phosphate</name>
        <dbReference type="ChEBI" id="CHEBI:58121"/>
    </ligand>
</feature>
<feature type="site" description="Essential for catalytic activity" evidence="1">
    <location>
        <position position="144"/>
    </location>
</feature>
<feature type="site" description="Essential for catalytic activity" evidence="1">
    <location>
        <position position="182"/>
    </location>
</feature>
<comment type="function">
    <text evidence="1">Catalyzes the conversion of D-ribulose 5-phosphate to formate and 3,4-dihydroxy-2-butanone 4-phosphate.</text>
</comment>
<comment type="catalytic activity">
    <reaction evidence="1">
        <text>D-ribulose 5-phosphate = (2S)-2-hydroxy-3-oxobutyl phosphate + formate + H(+)</text>
        <dbReference type="Rhea" id="RHEA:18457"/>
        <dbReference type="ChEBI" id="CHEBI:15378"/>
        <dbReference type="ChEBI" id="CHEBI:15740"/>
        <dbReference type="ChEBI" id="CHEBI:58121"/>
        <dbReference type="ChEBI" id="CHEBI:58830"/>
        <dbReference type="EC" id="4.1.99.12"/>
    </reaction>
</comment>
<comment type="cofactor">
    <cofactor evidence="1">
        <name>Mg(2+)</name>
        <dbReference type="ChEBI" id="CHEBI:18420"/>
    </cofactor>
    <cofactor evidence="1">
        <name>Mn(2+)</name>
        <dbReference type="ChEBI" id="CHEBI:29035"/>
    </cofactor>
    <text evidence="1">Binds 2 divalent metal cations per subunit. Magnesium or manganese.</text>
</comment>
<comment type="pathway">
    <text evidence="1">Cofactor biosynthesis; riboflavin biosynthesis; 2-hydroxy-3-oxobutyl phosphate from D-ribulose 5-phosphate: step 1/1.</text>
</comment>
<comment type="subunit">
    <text evidence="1">Homodimer.</text>
</comment>
<comment type="similarity">
    <text evidence="1">Belongs to the DHBP synthase family.</text>
</comment>
<organism>
    <name type="scientific">Ralstonia nicotianae (strain ATCC BAA-1114 / GMI1000)</name>
    <name type="common">Ralstonia solanacearum</name>
    <dbReference type="NCBI Taxonomy" id="267608"/>
    <lineage>
        <taxon>Bacteria</taxon>
        <taxon>Pseudomonadati</taxon>
        <taxon>Pseudomonadota</taxon>
        <taxon>Betaproteobacteria</taxon>
        <taxon>Burkholderiales</taxon>
        <taxon>Burkholderiaceae</taxon>
        <taxon>Ralstonia</taxon>
        <taxon>Ralstonia solanacearum species complex</taxon>
    </lineage>
</organism>
<name>RIBB_RALN1</name>
<accession>Q8XQN1</accession>
<evidence type="ECO:0000255" key="1">
    <source>
        <dbReference type="HAMAP-Rule" id="MF_00180"/>
    </source>
</evidence>
<reference key="1">
    <citation type="journal article" date="2002" name="Nature">
        <title>Genome sequence of the plant pathogen Ralstonia solanacearum.</title>
        <authorList>
            <person name="Salanoubat M."/>
            <person name="Genin S."/>
            <person name="Artiguenave F."/>
            <person name="Gouzy J."/>
            <person name="Mangenot S."/>
            <person name="Arlat M."/>
            <person name="Billault A."/>
            <person name="Brottier P."/>
            <person name="Camus J.-C."/>
            <person name="Cattolico L."/>
            <person name="Chandler M."/>
            <person name="Choisne N."/>
            <person name="Claudel-Renard C."/>
            <person name="Cunnac S."/>
            <person name="Demange N."/>
            <person name="Gaspin C."/>
            <person name="Lavie M."/>
            <person name="Moisan A."/>
            <person name="Robert C."/>
            <person name="Saurin W."/>
            <person name="Schiex T."/>
            <person name="Siguier P."/>
            <person name="Thebault P."/>
            <person name="Whalen M."/>
            <person name="Wincker P."/>
            <person name="Levy M."/>
            <person name="Weissenbach J."/>
            <person name="Boucher C.A."/>
        </authorList>
    </citation>
    <scope>NUCLEOTIDE SEQUENCE [LARGE SCALE GENOMIC DNA]</scope>
    <source>
        <strain>ATCC BAA-1114 / GMI1000</strain>
    </source>
</reference>
<geneLocation type="plasmid">
    <name>megaplasmid Rsp</name>
</geneLocation>
<proteinExistence type="inferred from homology"/>
<keyword id="KW-0456">Lyase</keyword>
<keyword id="KW-0460">Magnesium</keyword>
<keyword id="KW-0464">Manganese</keyword>
<keyword id="KW-0479">Metal-binding</keyword>
<keyword id="KW-0614">Plasmid</keyword>
<keyword id="KW-1185">Reference proteome</keyword>
<keyword id="KW-0686">Riboflavin biosynthesis</keyword>
<gene>
    <name evidence="1" type="primary">ribB</name>
    <name type="ordered locus">RSp1191</name>
    <name type="ORF">RS04751</name>
</gene>
<dbReference type="EC" id="4.1.99.12" evidence="1"/>
<dbReference type="EMBL" id="AL646053">
    <property type="protein sequence ID" value="CAD18342.1"/>
    <property type="molecule type" value="Genomic_DNA"/>
</dbReference>
<dbReference type="SMR" id="Q8XQN1"/>
<dbReference type="STRING" id="267608.RSp1191"/>
<dbReference type="EnsemblBacteria" id="CAD18342">
    <property type="protein sequence ID" value="CAD18342"/>
    <property type="gene ID" value="RSp1191"/>
</dbReference>
<dbReference type="KEGG" id="rso:RSp1191"/>
<dbReference type="eggNOG" id="COG0108">
    <property type="taxonomic scope" value="Bacteria"/>
</dbReference>
<dbReference type="HOGENOM" id="CLU_020273_3_0_4"/>
<dbReference type="UniPathway" id="UPA00275">
    <property type="reaction ID" value="UER00399"/>
</dbReference>
<dbReference type="Proteomes" id="UP000001436">
    <property type="component" value="Plasmid megaplasmid Rsp"/>
</dbReference>
<dbReference type="GO" id="GO:0005829">
    <property type="term" value="C:cytosol"/>
    <property type="evidence" value="ECO:0007669"/>
    <property type="project" value="TreeGrafter"/>
</dbReference>
<dbReference type="GO" id="GO:0008686">
    <property type="term" value="F:3,4-dihydroxy-2-butanone-4-phosphate synthase activity"/>
    <property type="evidence" value="ECO:0007669"/>
    <property type="project" value="UniProtKB-UniRule"/>
</dbReference>
<dbReference type="GO" id="GO:0000287">
    <property type="term" value="F:magnesium ion binding"/>
    <property type="evidence" value="ECO:0007669"/>
    <property type="project" value="UniProtKB-UniRule"/>
</dbReference>
<dbReference type="GO" id="GO:0030145">
    <property type="term" value="F:manganese ion binding"/>
    <property type="evidence" value="ECO:0007669"/>
    <property type="project" value="UniProtKB-UniRule"/>
</dbReference>
<dbReference type="GO" id="GO:0009231">
    <property type="term" value="P:riboflavin biosynthetic process"/>
    <property type="evidence" value="ECO:0007669"/>
    <property type="project" value="UniProtKB-UniRule"/>
</dbReference>
<dbReference type="FunFam" id="3.90.870.10:FF:000002">
    <property type="entry name" value="3,4-dihydroxy-2-butanone 4-phosphate synthase"/>
    <property type="match status" value="1"/>
</dbReference>
<dbReference type="Gene3D" id="3.90.870.10">
    <property type="entry name" value="DHBP synthase"/>
    <property type="match status" value="1"/>
</dbReference>
<dbReference type="HAMAP" id="MF_00180">
    <property type="entry name" value="RibB"/>
    <property type="match status" value="1"/>
</dbReference>
<dbReference type="InterPro" id="IPR017945">
    <property type="entry name" value="DHBP_synth_RibB-like_a/b_dom"/>
</dbReference>
<dbReference type="InterPro" id="IPR000422">
    <property type="entry name" value="DHBP_synthase_RibB"/>
</dbReference>
<dbReference type="NCBIfam" id="TIGR00506">
    <property type="entry name" value="ribB"/>
    <property type="match status" value="1"/>
</dbReference>
<dbReference type="PANTHER" id="PTHR21327:SF38">
    <property type="entry name" value="3,4-DIHYDROXY-2-BUTANONE 4-PHOSPHATE SYNTHASE"/>
    <property type="match status" value="1"/>
</dbReference>
<dbReference type="PANTHER" id="PTHR21327">
    <property type="entry name" value="GTP CYCLOHYDROLASE II-RELATED"/>
    <property type="match status" value="1"/>
</dbReference>
<dbReference type="Pfam" id="PF00926">
    <property type="entry name" value="DHBP_synthase"/>
    <property type="match status" value="1"/>
</dbReference>
<dbReference type="SUPFAM" id="SSF55821">
    <property type="entry name" value="YrdC/RibB"/>
    <property type="match status" value="1"/>
</dbReference>